<organism>
    <name type="scientific">Ehrlichia ruminantium (strain Gardel)</name>
    <dbReference type="NCBI Taxonomy" id="302409"/>
    <lineage>
        <taxon>Bacteria</taxon>
        <taxon>Pseudomonadati</taxon>
        <taxon>Pseudomonadota</taxon>
        <taxon>Alphaproteobacteria</taxon>
        <taxon>Rickettsiales</taxon>
        <taxon>Anaplasmataceae</taxon>
        <taxon>Ehrlichia</taxon>
    </lineage>
</organism>
<evidence type="ECO:0000255" key="1">
    <source>
        <dbReference type="HAMAP-Rule" id="MF_00182"/>
    </source>
</evidence>
<dbReference type="EC" id="2.1.2.9" evidence="1"/>
<dbReference type="EMBL" id="CR925677">
    <property type="protein sequence ID" value="CAI27652.1"/>
    <property type="molecule type" value="Genomic_DNA"/>
</dbReference>
<dbReference type="RefSeq" id="WP_011255372.1">
    <property type="nucleotide sequence ID" value="NC_006831.1"/>
</dbReference>
<dbReference type="SMR" id="Q5FFG4"/>
<dbReference type="KEGG" id="erg:ERGA_CDS_02000"/>
<dbReference type="HOGENOM" id="CLU_033347_1_1_5"/>
<dbReference type="OrthoDB" id="9802815at2"/>
<dbReference type="Proteomes" id="UP000000533">
    <property type="component" value="Chromosome"/>
</dbReference>
<dbReference type="GO" id="GO:0005829">
    <property type="term" value="C:cytosol"/>
    <property type="evidence" value="ECO:0007669"/>
    <property type="project" value="TreeGrafter"/>
</dbReference>
<dbReference type="GO" id="GO:0004479">
    <property type="term" value="F:methionyl-tRNA formyltransferase activity"/>
    <property type="evidence" value="ECO:0007669"/>
    <property type="project" value="UniProtKB-UniRule"/>
</dbReference>
<dbReference type="CDD" id="cd08646">
    <property type="entry name" value="FMT_core_Met-tRNA-FMT_N"/>
    <property type="match status" value="1"/>
</dbReference>
<dbReference type="CDD" id="cd08704">
    <property type="entry name" value="Met_tRNA_FMT_C"/>
    <property type="match status" value="1"/>
</dbReference>
<dbReference type="Gene3D" id="3.40.50.12230">
    <property type="match status" value="1"/>
</dbReference>
<dbReference type="HAMAP" id="MF_00182">
    <property type="entry name" value="Formyl_trans"/>
    <property type="match status" value="1"/>
</dbReference>
<dbReference type="InterPro" id="IPR005794">
    <property type="entry name" value="Fmt"/>
</dbReference>
<dbReference type="InterPro" id="IPR005793">
    <property type="entry name" value="Formyl_trans_C"/>
</dbReference>
<dbReference type="InterPro" id="IPR002376">
    <property type="entry name" value="Formyl_transf_N"/>
</dbReference>
<dbReference type="InterPro" id="IPR036477">
    <property type="entry name" value="Formyl_transf_N_sf"/>
</dbReference>
<dbReference type="InterPro" id="IPR011034">
    <property type="entry name" value="Formyl_transferase-like_C_sf"/>
</dbReference>
<dbReference type="InterPro" id="IPR044135">
    <property type="entry name" value="Met-tRNA-FMT_C"/>
</dbReference>
<dbReference type="InterPro" id="IPR041711">
    <property type="entry name" value="Met-tRNA-FMT_N"/>
</dbReference>
<dbReference type="NCBIfam" id="TIGR00460">
    <property type="entry name" value="fmt"/>
    <property type="match status" value="1"/>
</dbReference>
<dbReference type="PANTHER" id="PTHR11138">
    <property type="entry name" value="METHIONYL-TRNA FORMYLTRANSFERASE"/>
    <property type="match status" value="1"/>
</dbReference>
<dbReference type="PANTHER" id="PTHR11138:SF5">
    <property type="entry name" value="METHIONYL-TRNA FORMYLTRANSFERASE, MITOCHONDRIAL"/>
    <property type="match status" value="1"/>
</dbReference>
<dbReference type="Pfam" id="PF02911">
    <property type="entry name" value="Formyl_trans_C"/>
    <property type="match status" value="1"/>
</dbReference>
<dbReference type="Pfam" id="PF00551">
    <property type="entry name" value="Formyl_trans_N"/>
    <property type="match status" value="1"/>
</dbReference>
<dbReference type="SUPFAM" id="SSF50486">
    <property type="entry name" value="FMT C-terminal domain-like"/>
    <property type="match status" value="1"/>
</dbReference>
<dbReference type="SUPFAM" id="SSF53328">
    <property type="entry name" value="Formyltransferase"/>
    <property type="match status" value="1"/>
</dbReference>
<feature type="chain" id="PRO_0000082962" description="Methionyl-tRNA formyltransferase">
    <location>
        <begin position="1"/>
        <end position="303"/>
    </location>
</feature>
<feature type="binding site" evidence="1">
    <location>
        <begin position="110"/>
        <end position="113"/>
    </location>
    <ligand>
        <name>(6S)-5,6,7,8-tetrahydrofolate</name>
        <dbReference type="ChEBI" id="CHEBI:57453"/>
    </ligand>
</feature>
<keyword id="KW-0648">Protein biosynthesis</keyword>
<keyword id="KW-0808">Transferase</keyword>
<sequence length="303" mass="33900">MRIIFMGSPEFSVVALSSILNNTEHKIVSVYTRVPKPAGRGKVLTKTPIHTVAEMHGLTVYTPKSLKRIEEQDRIKELNPDVIVVVAYGLIIPKEVLSIPKYGCINIHPSLLPRWRGAAPIHYAILHGDSQTGVTIMQMNEGWDEGDILLQKKLSIDEQDNIETLSNKLSNLGGAMLVEVLNNIDNLVPVAQNEDNATYTNKIEDFHIDINETAEVACRRIRALYPRAFVFFNGKRLRILQASYYYDDSISSLKPSSILNSGMHIKCKGNTILVPLVVQMEGKTLCSIKDFVCGYNVKDYSIT</sequence>
<reference key="1">
    <citation type="journal article" date="2006" name="J. Bacteriol.">
        <title>Comparative genomic analysis of three strains of Ehrlichia ruminantium reveals an active process of genome size plasticity.</title>
        <authorList>
            <person name="Frutos R."/>
            <person name="Viari A."/>
            <person name="Ferraz C."/>
            <person name="Morgat A."/>
            <person name="Eychenie S."/>
            <person name="Kandassamy Y."/>
            <person name="Chantal I."/>
            <person name="Bensaid A."/>
            <person name="Coissac E."/>
            <person name="Vachiery N."/>
            <person name="Demaille J."/>
            <person name="Martinez D."/>
        </authorList>
    </citation>
    <scope>NUCLEOTIDE SEQUENCE [LARGE SCALE GENOMIC DNA]</scope>
    <source>
        <strain>Gardel</strain>
    </source>
</reference>
<proteinExistence type="inferred from homology"/>
<name>FMT_EHRRG</name>
<protein>
    <recommendedName>
        <fullName evidence="1">Methionyl-tRNA formyltransferase</fullName>
        <ecNumber evidence="1">2.1.2.9</ecNumber>
    </recommendedName>
</protein>
<accession>Q5FFG4</accession>
<gene>
    <name evidence="1" type="primary">fmt</name>
    <name type="ordered locus">ERGA_CDS_02000</name>
</gene>
<comment type="function">
    <text evidence="1">Attaches a formyl group to the free amino group of methionyl-tRNA(fMet). The formyl group appears to play a dual role in the initiator identity of N-formylmethionyl-tRNA by promoting its recognition by IF2 and preventing the misappropriation of this tRNA by the elongation apparatus.</text>
</comment>
<comment type="catalytic activity">
    <reaction evidence="1">
        <text>L-methionyl-tRNA(fMet) + (6R)-10-formyltetrahydrofolate = N-formyl-L-methionyl-tRNA(fMet) + (6S)-5,6,7,8-tetrahydrofolate + H(+)</text>
        <dbReference type="Rhea" id="RHEA:24380"/>
        <dbReference type="Rhea" id="RHEA-COMP:9952"/>
        <dbReference type="Rhea" id="RHEA-COMP:9953"/>
        <dbReference type="ChEBI" id="CHEBI:15378"/>
        <dbReference type="ChEBI" id="CHEBI:57453"/>
        <dbReference type="ChEBI" id="CHEBI:78530"/>
        <dbReference type="ChEBI" id="CHEBI:78844"/>
        <dbReference type="ChEBI" id="CHEBI:195366"/>
        <dbReference type="EC" id="2.1.2.9"/>
    </reaction>
</comment>
<comment type="similarity">
    <text evidence="1">Belongs to the Fmt family.</text>
</comment>